<accession>B7N198</accession>
<keyword id="KW-0687">Ribonucleoprotein</keyword>
<keyword id="KW-0689">Ribosomal protein</keyword>
<keyword id="KW-0694">RNA-binding</keyword>
<keyword id="KW-0699">rRNA-binding</keyword>
<name>RS3_ECO81</name>
<evidence type="ECO:0000255" key="1">
    <source>
        <dbReference type="HAMAP-Rule" id="MF_01309"/>
    </source>
</evidence>
<evidence type="ECO:0000305" key="2"/>
<dbReference type="EMBL" id="CU928162">
    <property type="protein sequence ID" value="CAR10116.2"/>
    <property type="molecule type" value="Genomic_DNA"/>
</dbReference>
<dbReference type="RefSeq" id="WP_000529945.1">
    <property type="nucleotide sequence ID" value="NC_011745.1"/>
</dbReference>
<dbReference type="SMR" id="B7N198"/>
<dbReference type="GeneID" id="97603663"/>
<dbReference type="KEGG" id="ecq:ECED1_3977"/>
<dbReference type="HOGENOM" id="CLU_058591_0_2_6"/>
<dbReference type="Proteomes" id="UP000000748">
    <property type="component" value="Chromosome"/>
</dbReference>
<dbReference type="GO" id="GO:0022627">
    <property type="term" value="C:cytosolic small ribosomal subunit"/>
    <property type="evidence" value="ECO:0007669"/>
    <property type="project" value="TreeGrafter"/>
</dbReference>
<dbReference type="GO" id="GO:0003729">
    <property type="term" value="F:mRNA binding"/>
    <property type="evidence" value="ECO:0007669"/>
    <property type="project" value="UniProtKB-UniRule"/>
</dbReference>
<dbReference type="GO" id="GO:0019843">
    <property type="term" value="F:rRNA binding"/>
    <property type="evidence" value="ECO:0007669"/>
    <property type="project" value="UniProtKB-UniRule"/>
</dbReference>
<dbReference type="GO" id="GO:0003735">
    <property type="term" value="F:structural constituent of ribosome"/>
    <property type="evidence" value="ECO:0007669"/>
    <property type="project" value="InterPro"/>
</dbReference>
<dbReference type="GO" id="GO:0006412">
    <property type="term" value="P:translation"/>
    <property type="evidence" value="ECO:0007669"/>
    <property type="project" value="UniProtKB-UniRule"/>
</dbReference>
<dbReference type="CDD" id="cd02412">
    <property type="entry name" value="KH-II_30S_S3"/>
    <property type="match status" value="1"/>
</dbReference>
<dbReference type="FunFam" id="3.30.1140.32:FF:000001">
    <property type="entry name" value="30S ribosomal protein S3"/>
    <property type="match status" value="1"/>
</dbReference>
<dbReference type="FunFam" id="3.30.300.20:FF:000001">
    <property type="entry name" value="30S ribosomal protein S3"/>
    <property type="match status" value="1"/>
</dbReference>
<dbReference type="Gene3D" id="3.30.300.20">
    <property type="match status" value="1"/>
</dbReference>
<dbReference type="Gene3D" id="3.30.1140.32">
    <property type="entry name" value="Ribosomal protein S3, C-terminal domain"/>
    <property type="match status" value="1"/>
</dbReference>
<dbReference type="HAMAP" id="MF_01309_B">
    <property type="entry name" value="Ribosomal_uS3_B"/>
    <property type="match status" value="1"/>
</dbReference>
<dbReference type="InterPro" id="IPR004087">
    <property type="entry name" value="KH_dom"/>
</dbReference>
<dbReference type="InterPro" id="IPR015946">
    <property type="entry name" value="KH_dom-like_a/b"/>
</dbReference>
<dbReference type="InterPro" id="IPR004044">
    <property type="entry name" value="KH_dom_type_2"/>
</dbReference>
<dbReference type="InterPro" id="IPR009019">
    <property type="entry name" value="KH_sf_prok-type"/>
</dbReference>
<dbReference type="InterPro" id="IPR036419">
    <property type="entry name" value="Ribosomal_S3_C_sf"/>
</dbReference>
<dbReference type="InterPro" id="IPR005704">
    <property type="entry name" value="Ribosomal_uS3_bac-typ"/>
</dbReference>
<dbReference type="InterPro" id="IPR001351">
    <property type="entry name" value="Ribosomal_uS3_C"/>
</dbReference>
<dbReference type="InterPro" id="IPR018280">
    <property type="entry name" value="Ribosomal_uS3_CS"/>
</dbReference>
<dbReference type="NCBIfam" id="TIGR01009">
    <property type="entry name" value="rpsC_bact"/>
    <property type="match status" value="1"/>
</dbReference>
<dbReference type="PANTHER" id="PTHR11760">
    <property type="entry name" value="30S/40S RIBOSOMAL PROTEIN S3"/>
    <property type="match status" value="1"/>
</dbReference>
<dbReference type="PANTHER" id="PTHR11760:SF19">
    <property type="entry name" value="SMALL RIBOSOMAL SUBUNIT PROTEIN US3C"/>
    <property type="match status" value="1"/>
</dbReference>
<dbReference type="Pfam" id="PF07650">
    <property type="entry name" value="KH_2"/>
    <property type="match status" value="1"/>
</dbReference>
<dbReference type="Pfam" id="PF00189">
    <property type="entry name" value="Ribosomal_S3_C"/>
    <property type="match status" value="1"/>
</dbReference>
<dbReference type="SMART" id="SM00322">
    <property type="entry name" value="KH"/>
    <property type="match status" value="1"/>
</dbReference>
<dbReference type="SUPFAM" id="SSF54814">
    <property type="entry name" value="Prokaryotic type KH domain (KH-domain type II)"/>
    <property type="match status" value="1"/>
</dbReference>
<dbReference type="SUPFAM" id="SSF54821">
    <property type="entry name" value="Ribosomal protein S3 C-terminal domain"/>
    <property type="match status" value="1"/>
</dbReference>
<dbReference type="PROSITE" id="PS50823">
    <property type="entry name" value="KH_TYPE_2"/>
    <property type="match status" value="1"/>
</dbReference>
<dbReference type="PROSITE" id="PS00548">
    <property type="entry name" value="RIBOSOMAL_S3"/>
    <property type="match status" value="1"/>
</dbReference>
<reference key="1">
    <citation type="journal article" date="2009" name="PLoS Genet.">
        <title>Organised genome dynamics in the Escherichia coli species results in highly diverse adaptive paths.</title>
        <authorList>
            <person name="Touchon M."/>
            <person name="Hoede C."/>
            <person name="Tenaillon O."/>
            <person name="Barbe V."/>
            <person name="Baeriswyl S."/>
            <person name="Bidet P."/>
            <person name="Bingen E."/>
            <person name="Bonacorsi S."/>
            <person name="Bouchier C."/>
            <person name="Bouvet O."/>
            <person name="Calteau A."/>
            <person name="Chiapello H."/>
            <person name="Clermont O."/>
            <person name="Cruveiller S."/>
            <person name="Danchin A."/>
            <person name="Diard M."/>
            <person name="Dossat C."/>
            <person name="Karoui M.E."/>
            <person name="Frapy E."/>
            <person name="Garry L."/>
            <person name="Ghigo J.M."/>
            <person name="Gilles A.M."/>
            <person name="Johnson J."/>
            <person name="Le Bouguenec C."/>
            <person name="Lescat M."/>
            <person name="Mangenot S."/>
            <person name="Martinez-Jehanne V."/>
            <person name="Matic I."/>
            <person name="Nassif X."/>
            <person name="Oztas S."/>
            <person name="Petit M.A."/>
            <person name="Pichon C."/>
            <person name="Rouy Z."/>
            <person name="Ruf C.S."/>
            <person name="Schneider D."/>
            <person name="Tourret J."/>
            <person name="Vacherie B."/>
            <person name="Vallenet D."/>
            <person name="Medigue C."/>
            <person name="Rocha E.P.C."/>
            <person name="Denamur E."/>
        </authorList>
    </citation>
    <scope>NUCLEOTIDE SEQUENCE [LARGE SCALE GENOMIC DNA]</scope>
    <source>
        <strain>ED1a</strain>
    </source>
</reference>
<feature type="chain" id="PRO_1000165496" description="Small ribosomal subunit protein uS3">
    <location>
        <begin position="1"/>
        <end position="233"/>
    </location>
</feature>
<feature type="domain" description="KH type-2" evidence="1">
    <location>
        <begin position="39"/>
        <end position="107"/>
    </location>
</feature>
<proteinExistence type="inferred from homology"/>
<organism>
    <name type="scientific">Escherichia coli O81 (strain ED1a)</name>
    <dbReference type="NCBI Taxonomy" id="585397"/>
    <lineage>
        <taxon>Bacteria</taxon>
        <taxon>Pseudomonadati</taxon>
        <taxon>Pseudomonadota</taxon>
        <taxon>Gammaproteobacteria</taxon>
        <taxon>Enterobacterales</taxon>
        <taxon>Enterobacteriaceae</taxon>
        <taxon>Escherichia</taxon>
    </lineage>
</organism>
<protein>
    <recommendedName>
        <fullName evidence="1">Small ribosomal subunit protein uS3</fullName>
    </recommendedName>
    <alternativeName>
        <fullName evidence="2">30S ribosomal protein S3</fullName>
    </alternativeName>
</protein>
<sequence>MGQKVHPNGIRLGIVKPWNSTWFANTKEFADNLDSDFKVRQYLTKELAKASVSRIVIERPAKSIRVTIHTARPGIVIGKKGEDVEKLRKVVADIAGVPAQINIAEVRKPELDAKLVADSITSQLERRVMFRRAMKRAVQNAMRLGAKGIKVEVSGRLGGAEIARTEWYREGRVPLHTLRADIDYNTSEAHTTYGVIGVKVWIFKGEILGGMAAVEQPEKPAAQPKKQQRKGRK</sequence>
<gene>
    <name evidence="1" type="primary">rpsC</name>
    <name type="ordered locus">ECED1_3977</name>
</gene>
<comment type="function">
    <text evidence="1">Binds the lower part of the 30S subunit head. Binds mRNA in the 70S ribosome, positioning it for translation.</text>
</comment>
<comment type="subunit">
    <text evidence="1">Part of the 30S ribosomal subunit. Forms a tight complex with proteins S10 and S14.</text>
</comment>
<comment type="similarity">
    <text evidence="1">Belongs to the universal ribosomal protein uS3 family.</text>
</comment>